<sequence length="571" mass="66853">MIETSKRSRIINKINNVVISDYKGAIFVWGPKSTGKYTTIKHVLESNSRIYCEADCNEHYSTASLFRSLLSTLRNINKFGRRKPINYDDDDEYINNDINKDNEEDNNNNNNNNNNNNNNNNNNNNNNNNNNNDGYDDGYDDDYDYKDKSLNERIELLKINDLSKEFNNMIIKSQIYSKKIPATSIPSVSEMVQVLYEKASTNETISIILRHSEKLMKFEGEFFYSLFKIEEFTDHPVCLYLLSEIPTERILSTGKEFKPIRNIHFPQYEPNEICSIVLNFKPNFSIINYNQNNNDSNNSNNNNNNNNHLKLKEEDNIKLYNKLVELVVRVFHTTTRDIIDIIFVCHNLFPNYIEPIYNGTCGVEDSDSILYQNIESKIVKSLRNITEKDEIVLEDQKRQQETYQIYPPQQVPQQQKQQEKEKEKEKGRQLASYSDAKNIPYHMKIVLISCFLASSFSRNKDKLLYTKEAVKRQSLSNEKTTGSKWFHFQRAREIGYKLFPSEKKALFQESIFKSLASLKYLETISSIEPAFTYKFKCTRRVHLEFIKQISASINFKIDTYLEAAQFQIISK</sequence>
<keyword id="KW-0235">DNA replication</keyword>
<keyword id="KW-0238">DNA-binding</keyword>
<keyword id="KW-0539">Nucleus</keyword>
<keyword id="KW-1185">Reference proteome</keyword>
<feature type="chain" id="PRO_0000330358" description="Origin recognition complex subunit 5">
    <location>
        <begin position="1"/>
        <end position="571"/>
    </location>
</feature>
<feature type="region of interest" description="Disordered" evidence="2">
    <location>
        <begin position="90"/>
        <end position="142"/>
    </location>
</feature>
<feature type="region of interest" description="Disordered" evidence="2">
    <location>
        <begin position="404"/>
        <end position="430"/>
    </location>
</feature>
<feature type="compositionally biased region" description="Low complexity" evidence="2">
    <location>
        <begin position="107"/>
        <end position="133"/>
    </location>
</feature>
<feature type="compositionally biased region" description="Low complexity" evidence="2">
    <location>
        <begin position="407"/>
        <end position="416"/>
    </location>
</feature>
<feature type="compositionally biased region" description="Basic and acidic residues" evidence="2">
    <location>
        <begin position="417"/>
        <end position="428"/>
    </location>
</feature>
<protein>
    <recommendedName>
        <fullName>Origin recognition complex subunit 5</fullName>
    </recommendedName>
    <alternativeName>
        <fullName>Origin replication complex subunit E</fullName>
    </alternativeName>
</protein>
<proteinExistence type="inferred from homology"/>
<organism>
    <name type="scientific">Dictyostelium discoideum</name>
    <name type="common">Social amoeba</name>
    <dbReference type="NCBI Taxonomy" id="44689"/>
    <lineage>
        <taxon>Eukaryota</taxon>
        <taxon>Amoebozoa</taxon>
        <taxon>Evosea</taxon>
        <taxon>Eumycetozoa</taxon>
        <taxon>Dictyostelia</taxon>
        <taxon>Dictyosteliales</taxon>
        <taxon>Dictyosteliaceae</taxon>
        <taxon>Dictyostelium</taxon>
    </lineage>
</organism>
<evidence type="ECO:0000250" key="1"/>
<evidence type="ECO:0000256" key="2">
    <source>
        <dbReference type="SAM" id="MobiDB-lite"/>
    </source>
</evidence>
<evidence type="ECO:0000305" key="3"/>
<name>ORC5_DICDI</name>
<dbReference type="EMBL" id="AAFI02000200">
    <property type="protein sequence ID" value="EAL60806.1"/>
    <property type="molecule type" value="Genomic_DNA"/>
</dbReference>
<dbReference type="RefSeq" id="XP_629244.1">
    <property type="nucleotide sequence ID" value="XM_629242.1"/>
</dbReference>
<dbReference type="SMR" id="Q54C22"/>
<dbReference type="FunCoup" id="Q54C22">
    <property type="interactions" value="548"/>
</dbReference>
<dbReference type="STRING" id="44689.Q54C22"/>
<dbReference type="PaxDb" id="44689-DDB0233112"/>
<dbReference type="EnsemblProtists" id="EAL60806">
    <property type="protein sequence ID" value="EAL60806"/>
    <property type="gene ID" value="DDB_G0293214"/>
</dbReference>
<dbReference type="GeneID" id="8629126"/>
<dbReference type="KEGG" id="ddi:DDB_G0293214"/>
<dbReference type="dictyBase" id="DDB_G0293214">
    <property type="gene designation" value="orcE"/>
</dbReference>
<dbReference type="VEuPathDB" id="AmoebaDB:DDB_G0293214"/>
<dbReference type="eggNOG" id="KOG2543">
    <property type="taxonomic scope" value="Eukaryota"/>
</dbReference>
<dbReference type="HOGENOM" id="CLU_477720_0_0_1"/>
<dbReference type="InParanoid" id="Q54C22"/>
<dbReference type="OMA" id="CYLASTY"/>
<dbReference type="PhylomeDB" id="Q54C22"/>
<dbReference type="Reactome" id="R-DDI-68616">
    <property type="pathway name" value="Assembly of the ORC complex at the origin of replication"/>
</dbReference>
<dbReference type="Reactome" id="R-DDI-68689">
    <property type="pathway name" value="CDC6 association with the ORC:origin complex"/>
</dbReference>
<dbReference type="Reactome" id="R-DDI-68962">
    <property type="pathway name" value="Activation of the pre-replicative complex"/>
</dbReference>
<dbReference type="PRO" id="PR:Q54C22"/>
<dbReference type="Proteomes" id="UP000002195">
    <property type="component" value="Chromosome 6"/>
</dbReference>
<dbReference type="GO" id="GO:0005664">
    <property type="term" value="C:nuclear origin of replication recognition complex"/>
    <property type="evidence" value="ECO:0000318"/>
    <property type="project" value="GO_Central"/>
</dbReference>
<dbReference type="GO" id="GO:0005634">
    <property type="term" value="C:nucleus"/>
    <property type="evidence" value="ECO:0000250"/>
    <property type="project" value="dictyBase"/>
</dbReference>
<dbReference type="GO" id="GO:0003688">
    <property type="term" value="F:DNA replication origin binding"/>
    <property type="evidence" value="ECO:0000318"/>
    <property type="project" value="GO_Central"/>
</dbReference>
<dbReference type="GO" id="GO:0006270">
    <property type="term" value="P:DNA replication initiation"/>
    <property type="evidence" value="ECO:0000318"/>
    <property type="project" value="GO_Central"/>
</dbReference>
<dbReference type="Gene3D" id="3.40.50.300">
    <property type="entry name" value="P-loop containing nucleotide triphosphate hydrolases"/>
    <property type="match status" value="1"/>
</dbReference>
<dbReference type="InterPro" id="IPR020796">
    <property type="entry name" value="ORC5"/>
</dbReference>
<dbReference type="InterPro" id="IPR047088">
    <property type="entry name" value="ORC5_C"/>
</dbReference>
<dbReference type="InterPro" id="IPR048866">
    <property type="entry name" value="ORC5_lid"/>
</dbReference>
<dbReference type="InterPro" id="IPR027417">
    <property type="entry name" value="P-loop_NTPase"/>
</dbReference>
<dbReference type="PANTHER" id="PTHR12705">
    <property type="entry name" value="ORIGIN RECOGNITION COMPLEX SUBUNIT 5"/>
    <property type="match status" value="1"/>
</dbReference>
<dbReference type="PANTHER" id="PTHR12705:SF0">
    <property type="entry name" value="ORIGIN RECOGNITION COMPLEX SUBUNIT 5"/>
    <property type="match status" value="1"/>
</dbReference>
<dbReference type="Pfam" id="PF14630">
    <property type="entry name" value="ORC5_C"/>
    <property type="match status" value="1"/>
</dbReference>
<dbReference type="Pfam" id="PF21639">
    <property type="entry name" value="ORC5_lid"/>
    <property type="match status" value="1"/>
</dbReference>
<accession>Q54C22</accession>
<gene>
    <name type="primary">orcE</name>
    <name type="synonym">orc5</name>
    <name type="ORF">DDB_G0293214</name>
</gene>
<comment type="function">
    <text evidence="1">Component of the origin recognition complex (ORC) that binds origins of replication. DNA-binding is ATP-dependent, however specific DNA sequences that define origins of replication have not been identified so far. ORC is required to assemble the pre-replication complex necessary to initiate DNA replication (By similarity).</text>
</comment>
<comment type="subunit">
    <text evidence="1">ORC is composed of six subunits.</text>
</comment>
<comment type="subcellular location">
    <subcellularLocation>
        <location evidence="1">Nucleus</location>
    </subcellularLocation>
</comment>
<comment type="similarity">
    <text evidence="3">Belongs to the ORC1 family.</text>
</comment>
<reference key="1">
    <citation type="journal article" date="2005" name="Nature">
        <title>The genome of the social amoeba Dictyostelium discoideum.</title>
        <authorList>
            <person name="Eichinger L."/>
            <person name="Pachebat J.A."/>
            <person name="Gloeckner G."/>
            <person name="Rajandream M.A."/>
            <person name="Sucgang R."/>
            <person name="Berriman M."/>
            <person name="Song J."/>
            <person name="Olsen R."/>
            <person name="Szafranski K."/>
            <person name="Xu Q."/>
            <person name="Tunggal B."/>
            <person name="Kummerfeld S."/>
            <person name="Madera M."/>
            <person name="Konfortov B.A."/>
            <person name="Rivero F."/>
            <person name="Bankier A.T."/>
            <person name="Lehmann R."/>
            <person name="Hamlin N."/>
            <person name="Davies R."/>
            <person name="Gaudet P."/>
            <person name="Fey P."/>
            <person name="Pilcher K."/>
            <person name="Chen G."/>
            <person name="Saunders D."/>
            <person name="Sodergren E.J."/>
            <person name="Davis P."/>
            <person name="Kerhornou A."/>
            <person name="Nie X."/>
            <person name="Hall N."/>
            <person name="Anjard C."/>
            <person name="Hemphill L."/>
            <person name="Bason N."/>
            <person name="Farbrother P."/>
            <person name="Desany B."/>
            <person name="Just E."/>
            <person name="Morio T."/>
            <person name="Rost R."/>
            <person name="Churcher C.M."/>
            <person name="Cooper J."/>
            <person name="Haydock S."/>
            <person name="van Driessche N."/>
            <person name="Cronin A."/>
            <person name="Goodhead I."/>
            <person name="Muzny D.M."/>
            <person name="Mourier T."/>
            <person name="Pain A."/>
            <person name="Lu M."/>
            <person name="Harper D."/>
            <person name="Lindsay R."/>
            <person name="Hauser H."/>
            <person name="James K.D."/>
            <person name="Quiles M."/>
            <person name="Madan Babu M."/>
            <person name="Saito T."/>
            <person name="Buchrieser C."/>
            <person name="Wardroper A."/>
            <person name="Felder M."/>
            <person name="Thangavelu M."/>
            <person name="Johnson D."/>
            <person name="Knights A."/>
            <person name="Loulseged H."/>
            <person name="Mungall K.L."/>
            <person name="Oliver K."/>
            <person name="Price C."/>
            <person name="Quail M.A."/>
            <person name="Urushihara H."/>
            <person name="Hernandez J."/>
            <person name="Rabbinowitsch E."/>
            <person name="Steffen D."/>
            <person name="Sanders M."/>
            <person name="Ma J."/>
            <person name="Kohara Y."/>
            <person name="Sharp S."/>
            <person name="Simmonds M.N."/>
            <person name="Spiegler S."/>
            <person name="Tivey A."/>
            <person name="Sugano S."/>
            <person name="White B."/>
            <person name="Walker D."/>
            <person name="Woodward J.R."/>
            <person name="Winckler T."/>
            <person name="Tanaka Y."/>
            <person name="Shaulsky G."/>
            <person name="Schleicher M."/>
            <person name="Weinstock G.M."/>
            <person name="Rosenthal A."/>
            <person name="Cox E.C."/>
            <person name="Chisholm R.L."/>
            <person name="Gibbs R.A."/>
            <person name="Loomis W.F."/>
            <person name="Platzer M."/>
            <person name="Kay R.R."/>
            <person name="Williams J.G."/>
            <person name="Dear P.H."/>
            <person name="Noegel A.A."/>
            <person name="Barrell B.G."/>
            <person name="Kuspa A."/>
        </authorList>
    </citation>
    <scope>NUCLEOTIDE SEQUENCE [LARGE SCALE GENOMIC DNA]</scope>
    <source>
        <strain>AX4</strain>
    </source>
</reference>